<protein>
    <recommendedName>
        <fullName evidence="4">Cytidine deaminase</fullName>
        <shortName>CDD</shortName>
        <ecNumber evidence="3">3.5.4.5</ecNumber>
    </recommendedName>
    <alternativeName>
        <fullName>Cytidine aminohydrolase</fullName>
        <shortName>CDA</shortName>
    </alternativeName>
</protein>
<sequence length="133" mass="14072">MPDVDWNMLRGNATQAAAGAYVPYSRFAVGAAALVDDGRVVTGCNVENVSYGLTLCAECAVVCALHSTGGGRLLALACVDGHGSVLMPCGRCRQVLLEHGGSELLIDHPVRPRRLGDLLPDAFGLDDLPRERR</sequence>
<accession>P9WPH3</accession>
<accession>L0TEZ3</accession>
<accession>O53367</accession>
<accession>Q7D5Q5</accession>
<dbReference type="EC" id="3.5.4.5" evidence="3"/>
<dbReference type="EMBL" id="AL123456">
    <property type="protein sequence ID" value="CCP46135.1"/>
    <property type="molecule type" value="Genomic_DNA"/>
</dbReference>
<dbReference type="PIR" id="B70843">
    <property type="entry name" value="B70843"/>
</dbReference>
<dbReference type="RefSeq" id="NP_217832.1">
    <property type="nucleotide sequence ID" value="NC_000962.3"/>
</dbReference>
<dbReference type="RefSeq" id="WP_003417264.1">
    <property type="nucleotide sequence ID" value="NZ_NVQJ01000003.1"/>
</dbReference>
<dbReference type="PDB" id="3IJF">
    <property type="method" value="X-ray"/>
    <property type="resolution" value="1.99 A"/>
    <property type="chains" value="X=1-133"/>
</dbReference>
<dbReference type="PDB" id="4WIF">
    <property type="method" value="X-ray"/>
    <property type="resolution" value="1.80 A"/>
    <property type="chains" value="A/B=1-133"/>
</dbReference>
<dbReference type="PDB" id="4WIG">
    <property type="method" value="X-ray"/>
    <property type="resolution" value="1.76 A"/>
    <property type="chains" value="A/B=1-133"/>
</dbReference>
<dbReference type="PDBsum" id="3IJF"/>
<dbReference type="PDBsum" id="4WIF"/>
<dbReference type="PDBsum" id="4WIG"/>
<dbReference type="SMR" id="P9WPH3"/>
<dbReference type="FunCoup" id="P9WPH3">
    <property type="interactions" value="62"/>
</dbReference>
<dbReference type="STRING" id="83332.Rv3315c"/>
<dbReference type="PaxDb" id="83332-Rv3315c"/>
<dbReference type="GeneID" id="887975"/>
<dbReference type="KEGG" id="mtu:Rv3315c"/>
<dbReference type="KEGG" id="mtv:RVBD_3315c"/>
<dbReference type="TubercuList" id="Rv3315c"/>
<dbReference type="eggNOG" id="COG0295">
    <property type="taxonomic scope" value="Bacteria"/>
</dbReference>
<dbReference type="InParanoid" id="P9WPH3"/>
<dbReference type="OrthoDB" id="9795347at2"/>
<dbReference type="PhylomeDB" id="P9WPH3"/>
<dbReference type="BRENDA" id="3.5.4.5">
    <property type="organism ID" value="3445"/>
</dbReference>
<dbReference type="EvolutionaryTrace" id="P9WPH3"/>
<dbReference type="Proteomes" id="UP000001584">
    <property type="component" value="Chromosome"/>
</dbReference>
<dbReference type="GO" id="GO:0005829">
    <property type="term" value="C:cytosol"/>
    <property type="evidence" value="ECO:0000318"/>
    <property type="project" value="GO_Central"/>
</dbReference>
<dbReference type="GO" id="GO:0005886">
    <property type="term" value="C:plasma membrane"/>
    <property type="evidence" value="ECO:0007005"/>
    <property type="project" value="MTBBASE"/>
</dbReference>
<dbReference type="GO" id="GO:0004126">
    <property type="term" value="F:cytidine deaminase activity"/>
    <property type="evidence" value="ECO:0000314"/>
    <property type="project" value="MTBBASE"/>
</dbReference>
<dbReference type="GO" id="GO:0008270">
    <property type="term" value="F:zinc ion binding"/>
    <property type="evidence" value="ECO:0000314"/>
    <property type="project" value="MTBBASE"/>
</dbReference>
<dbReference type="GO" id="GO:0009972">
    <property type="term" value="P:cytidine deamination"/>
    <property type="evidence" value="ECO:0000314"/>
    <property type="project" value="MTBBASE"/>
</dbReference>
<dbReference type="GO" id="GO:0043100">
    <property type="term" value="P:pyrimidine nucleobase salvage"/>
    <property type="evidence" value="ECO:0000314"/>
    <property type="project" value="MTBBASE"/>
</dbReference>
<dbReference type="GO" id="GO:0046109">
    <property type="term" value="P:uridine biosynthetic process"/>
    <property type="evidence" value="ECO:0000314"/>
    <property type="project" value="MTBBASE"/>
</dbReference>
<dbReference type="CDD" id="cd01283">
    <property type="entry name" value="cytidine_deaminase"/>
    <property type="match status" value="1"/>
</dbReference>
<dbReference type="FunFam" id="3.40.140.10:FF:000008">
    <property type="entry name" value="Cytidine deaminase"/>
    <property type="match status" value="1"/>
</dbReference>
<dbReference type="Gene3D" id="3.40.140.10">
    <property type="entry name" value="Cytidine Deaminase, domain 2"/>
    <property type="match status" value="1"/>
</dbReference>
<dbReference type="InterPro" id="IPR002125">
    <property type="entry name" value="CMP_dCMP_dom"/>
</dbReference>
<dbReference type="InterPro" id="IPR050202">
    <property type="entry name" value="Cyt/Deoxycyt_deaminase"/>
</dbReference>
<dbReference type="InterPro" id="IPR016193">
    <property type="entry name" value="Cytidine_deaminase-like"/>
</dbReference>
<dbReference type="NCBIfam" id="NF004064">
    <property type="entry name" value="PRK05578.1"/>
    <property type="match status" value="1"/>
</dbReference>
<dbReference type="PANTHER" id="PTHR11644">
    <property type="entry name" value="CYTIDINE DEAMINASE"/>
    <property type="match status" value="1"/>
</dbReference>
<dbReference type="PANTHER" id="PTHR11644:SF2">
    <property type="entry name" value="CYTIDINE DEAMINASE"/>
    <property type="match status" value="1"/>
</dbReference>
<dbReference type="Pfam" id="PF00383">
    <property type="entry name" value="dCMP_cyt_deam_1"/>
    <property type="match status" value="1"/>
</dbReference>
<dbReference type="SUPFAM" id="SSF53927">
    <property type="entry name" value="Cytidine deaminase-like"/>
    <property type="match status" value="1"/>
</dbReference>
<dbReference type="PROSITE" id="PS00903">
    <property type="entry name" value="CYT_DCMP_DEAMINASES_1"/>
    <property type="match status" value="1"/>
</dbReference>
<dbReference type="PROSITE" id="PS51747">
    <property type="entry name" value="CYT_DCMP_DEAMINASES_2"/>
    <property type="match status" value="1"/>
</dbReference>
<proteinExistence type="evidence at protein level"/>
<organism>
    <name type="scientific">Mycobacterium tuberculosis (strain ATCC 25618 / H37Rv)</name>
    <dbReference type="NCBI Taxonomy" id="83332"/>
    <lineage>
        <taxon>Bacteria</taxon>
        <taxon>Bacillati</taxon>
        <taxon>Actinomycetota</taxon>
        <taxon>Actinomycetes</taxon>
        <taxon>Mycobacteriales</taxon>
        <taxon>Mycobacteriaceae</taxon>
        <taxon>Mycobacterium</taxon>
        <taxon>Mycobacterium tuberculosis complex</taxon>
    </lineage>
</organism>
<feature type="initiator methionine" description="Removed" evidence="3">
    <location>
        <position position="1"/>
    </location>
</feature>
<feature type="chain" id="PRO_0000420699" description="Cytidine deaminase">
    <location>
        <begin position="2"/>
        <end position="133"/>
    </location>
</feature>
<feature type="domain" description="CMP/dCMP-type deaminase" evidence="2">
    <location>
        <begin position="4"/>
        <end position="126"/>
    </location>
</feature>
<feature type="active site" description="Proton donor" evidence="1">
    <location>
        <position position="58"/>
    </location>
</feature>
<feature type="binding site" evidence="1">
    <location>
        <begin position="45"/>
        <end position="47"/>
    </location>
    <ligand>
        <name>substrate</name>
    </ligand>
</feature>
<feature type="binding site" evidence="3 6">
    <location>
        <position position="56"/>
    </location>
    <ligand>
        <name>Zn(2+)</name>
        <dbReference type="ChEBI" id="CHEBI:29105"/>
    </ligand>
</feature>
<feature type="binding site" evidence="3 6">
    <location>
        <position position="89"/>
    </location>
    <ligand>
        <name>Zn(2+)</name>
        <dbReference type="ChEBI" id="CHEBI:29105"/>
    </ligand>
</feature>
<feature type="binding site" evidence="3 6">
    <location>
        <position position="92"/>
    </location>
    <ligand>
        <name>Zn(2+)</name>
        <dbReference type="ChEBI" id="CHEBI:29105"/>
    </ligand>
</feature>
<feature type="helix" evidence="7">
    <location>
        <begin position="6"/>
        <end position="17"/>
    </location>
</feature>
<feature type="turn" evidence="7">
    <location>
        <begin position="23"/>
        <end position="25"/>
    </location>
</feature>
<feature type="strand" evidence="7">
    <location>
        <begin position="29"/>
        <end position="35"/>
    </location>
</feature>
<feature type="strand" evidence="7">
    <location>
        <begin position="40"/>
        <end position="44"/>
    </location>
</feature>
<feature type="helix" evidence="7">
    <location>
        <begin position="51"/>
        <end position="53"/>
    </location>
</feature>
<feature type="helix" evidence="7">
    <location>
        <begin position="57"/>
        <end position="67"/>
    </location>
</feature>
<feature type="strand" evidence="7">
    <location>
        <begin position="73"/>
        <end position="80"/>
    </location>
</feature>
<feature type="helix" evidence="7">
    <location>
        <begin position="90"/>
        <end position="100"/>
    </location>
</feature>
<feature type="strand" evidence="7">
    <location>
        <begin position="109"/>
        <end position="111"/>
    </location>
</feature>
<feature type="helix" evidence="7">
    <location>
        <begin position="115"/>
        <end position="118"/>
    </location>
</feature>
<feature type="helix" evidence="7">
    <location>
        <begin position="125"/>
        <end position="127"/>
    </location>
</feature>
<name>CDD_MYCTU</name>
<keyword id="KW-0002">3D-structure</keyword>
<keyword id="KW-0903">Direct protein sequencing</keyword>
<keyword id="KW-0378">Hydrolase</keyword>
<keyword id="KW-0479">Metal-binding</keyword>
<keyword id="KW-1185">Reference proteome</keyword>
<keyword id="KW-0862">Zinc</keyword>
<evidence type="ECO:0000250" key="1"/>
<evidence type="ECO:0000255" key="2">
    <source>
        <dbReference type="PROSITE-ProRule" id="PRU01083"/>
    </source>
</evidence>
<evidence type="ECO:0000269" key="3">
    <source>
    </source>
</evidence>
<evidence type="ECO:0000303" key="4">
    <source>
    </source>
</evidence>
<evidence type="ECO:0000305" key="5"/>
<evidence type="ECO:0007744" key="6">
    <source>
        <dbReference type="PDB" id="3IJF"/>
    </source>
</evidence>
<evidence type="ECO:0007829" key="7">
    <source>
        <dbReference type="PDB" id="4WIG"/>
    </source>
</evidence>
<gene>
    <name type="primary">cdd</name>
    <name type="ordered locus">Rv3315c</name>
</gene>
<reference key="1">
    <citation type="journal article" date="1998" name="Nature">
        <title>Deciphering the biology of Mycobacterium tuberculosis from the complete genome sequence.</title>
        <authorList>
            <person name="Cole S.T."/>
            <person name="Brosch R."/>
            <person name="Parkhill J."/>
            <person name="Garnier T."/>
            <person name="Churcher C.M."/>
            <person name="Harris D.E."/>
            <person name="Gordon S.V."/>
            <person name="Eiglmeier K."/>
            <person name="Gas S."/>
            <person name="Barry C.E. III"/>
            <person name="Tekaia F."/>
            <person name="Badcock K."/>
            <person name="Basham D."/>
            <person name="Brown D."/>
            <person name="Chillingworth T."/>
            <person name="Connor R."/>
            <person name="Davies R.M."/>
            <person name="Devlin K."/>
            <person name="Feltwell T."/>
            <person name="Gentles S."/>
            <person name="Hamlin N."/>
            <person name="Holroyd S."/>
            <person name="Hornsby T."/>
            <person name="Jagels K."/>
            <person name="Krogh A."/>
            <person name="McLean J."/>
            <person name="Moule S."/>
            <person name="Murphy L.D."/>
            <person name="Oliver S."/>
            <person name="Osborne J."/>
            <person name="Quail M.A."/>
            <person name="Rajandream M.A."/>
            <person name="Rogers J."/>
            <person name="Rutter S."/>
            <person name="Seeger K."/>
            <person name="Skelton S."/>
            <person name="Squares S."/>
            <person name="Squares R."/>
            <person name="Sulston J.E."/>
            <person name="Taylor K."/>
            <person name="Whitehead S."/>
            <person name="Barrell B.G."/>
        </authorList>
    </citation>
    <scope>NUCLEOTIDE SEQUENCE [LARGE SCALE GENOMIC DNA]</scope>
    <source>
        <strain>ATCC 25618 / H37Rv</strain>
    </source>
</reference>
<reference key="2">
    <citation type="journal article" date="2011" name="Mol. Cell. Proteomics">
        <title>Proteogenomic analysis of Mycobacterium tuberculosis by high resolution mass spectrometry.</title>
        <authorList>
            <person name="Kelkar D.S."/>
            <person name="Kumar D."/>
            <person name="Kumar P."/>
            <person name="Balakrishnan L."/>
            <person name="Muthusamy B."/>
            <person name="Yadav A.K."/>
            <person name="Shrivastava P."/>
            <person name="Marimuthu A."/>
            <person name="Anand S."/>
            <person name="Sundaram H."/>
            <person name="Kingsbury R."/>
            <person name="Harsha H.C."/>
            <person name="Nair B."/>
            <person name="Prasad T.S."/>
            <person name="Chauhan D.S."/>
            <person name="Katoch K."/>
            <person name="Katoch V.M."/>
            <person name="Kumar P."/>
            <person name="Chaerkady R."/>
            <person name="Ramachandran S."/>
            <person name="Dash D."/>
            <person name="Pandey A."/>
        </authorList>
    </citation>
    <scope>IDENTIFICATION BY MASS SPECTROMETRY [LARGE SCALE ANALYSIS]</scope>
    <source>
        <strain>ATCC 25618 / H37Rv</strain>
    </source>
</reference>
<reference evidence="6" key="3">
    <citation type="journal article" date="2010" name="J. Struct. Biol.">
        <title>Structural and functional analyses of Mycobacterium tuberculosis Rv3315c-encoded metal-dependent homotetrameric cytidine deaminase.</title>
        <authorList>
            <person name="Sanchez-Quitian Z.A."/>
            <person name="Schneider C.Z."/>
            <person name="Ducati R.G."/>
            <person name="de Azevedo W.F."/>
            <person name="Bloch C."/>
            <person name="Basso L.A."/>
            <person name="Santos D.S."/>
        </authorList>
    </citation>
    <scope>X-RAY CRYSTALLOGRAPHY (1.99 ANGSTROMS) IN COMPLEX WITH ZINC IONS</scope>
    <scope>PROTEIN SEQUENCE OF 2-31</scope>
    <scope>FUNCTION</scope>
    <scope>CATALYTIC ACTIVITY</scope>
    <scope>BIOPHYSICOCHEMICAL PROPERTIES</scope>
    <scope>COFACTOR</scope>
    <scope>MASS SPECTROMETRY</scope>
    <scope>SUBUNIT</scope>
</reference>
<comment type="function">
    <text evidence="3">Recycles cytidine and 2-deoxycytidine for uridine and 2-deoxyuridine synthesis, respectively. Catalyzes the hydrolytic deamination of cytidine and 2-deoxycytidine to form, respectively, uridine and 2-deoxyuridine.</text>
</comment>
<comment type="catalytic activity">
    <reaction evidence="3">
        <text>cytidine + H2O + H(+) = uridine + NH4(+)</text>
        <dbReference type="Rhea" id="RHEA:16069"/>
        <dbReference type="ChEBI" id="CHEBI:15377"/>
        <dbReference type="ChEBI" id="CHEBI:15378"/>
        <dbReference type="ChEBI" id="CHEBI:16704"/>
        <dbReference type="ChEBI" id="CHEBI:17562"/>
        <dbReference type="ChEBI" id="CHEBI:28938"/>
        <dbReference type="EC" id="3.5.4.5"/>
    </reaction>
</comment>
<comment type="catalytic activity">
    <reaction evidence="3">
        <text>2'-deoxycytidine + H2O + H(+) = 2'-deoxyuridine + NH4(+)</text>
        <dbReference type="Rhea" id="RHEA:13433"/>
        <dbReference type="ChEBI" id="CHEBI:15377"/>
        <dbReference type="ChEBI" id="CHEBI:15378"/>
        <dbReference type="ChEBI" id="CHEBI:15698"/>
        <dbReference type="ChEBI" id="CHEBI:16450"/>
        <dbReference type="ChEBI" id="CHEBI:28938"/>
        <dbReference type="EC" id="3.5.4.5"/>
    </reaction>
</comment>
<comment type="cofactor">
    <cofactor evidence="3">
        <name>Zn(2+)</name>
        <dbReference type="ChEBI" id="CHEBI:29105"/>
    </cofactor>
    <text evidence="3">Binds 1 Zn(2+) ion per subunit.</text>
</comment>
<comment type="biophysicochemical properties">
    <kinetics>
        <KM evidence="3">1004 uM for cytidine</KM>
        <KM evidence="3">1059 uM for 2-deoxycytidine</KM>
        <text>kcat is 4.8 and 3.5 sec(-1) with cytidine and 2-deoxycytidine as substrate, respectively.</text>
    </kinetics>
</comment>
<comment type="subunit">
    <text evidence="3">Homotetramer.</text>
</comment>
<comment type="mass spectrometry" mass="13938.0" method="Electrospray" evidence="3"/>
<comment type="similarity">
    <text evidence="5">Belongs to the cytidine and deoxycytidylate deaminase family.</text>
</comment>